<name>RNPH_DEIRA</name>
<protein>
    <recommendedName>
        <fullName evidence="1">Ribonuclease PH</fullName>
        <shortName evidence="1">RNase PH</shortName>
        <ecNumber evidence="1">2.7.7.56</ecNumber>
    </recommendedName>
    <alternativeName>
        <fullName evidence="1">tRNA nucleotidyltransferase</fullName>
    </alternativeName>
</protein>
<organism>
    <name type="scientific">Deinococcus radiodurans (strain ATCC 13939 / DSM 20539 / JCM 16871 / CCUG 27074 / LMG 4051 / NBRC 15346 / NCIMB 9279 / VKM B-1422 / R1)</name>
    <dbReference type="NCBI Taxonomy" id="243230"/>
    <lineage>
        <taxon>Bacteria</taxon>
        <taxon>Thermotogati</taxon>
        <taxon>Deinococcota</taxon>
        <taxon>Deinococci</taxon>
        <taxon>Deinococcales</taxon>
        <taxon>Deinococcaceae</taxon>
        <taxon>Deinococcus</taxon>
    </lineage>
</organism>
<evidence type="ECO:0000255" key="1">
    <source>
        <dbReference type="HAMAP-Rule" id="MF_00564"/>
    </source>
</evidence>
<evidence type="ECO:0000256" key="2">
    <source>
        <dbReference type="SAM" id="MobiDB-lite"/>
    </source>
</evidence>
<comment type="function">
    <text evidence="1">Phosphorolytic 3'-5' exoribonuclease that plays an important role in tRNA 3'-end maturation. Removes nucleotide residues following the 3'-CCA terminus of tRNAs; can also add nucleotides to the ends of RNA molecules by using nucleoside diphosphates as substrates, but this may not be physiologically important. Probably plays a role in initiation of 16S rRNA degradation (leading to ribosome degradation) during starvation.</text>
</comment>
<comment type="catalytic activity">
    <reaction evidence="1">
        <text>tRNA(n+1) + phosphate = tRNA(n) + a ribonucleoside 5'-diphosphate</text>
        <dbReference type="Rhea" id="RHEA:10628"/>
        <dbReference type="Rhea" id="RHEA-COMP:17343"/>
        <dbReference type="Rhea" id="RHEA-COMP:17344"/>
        <dbReference type="ChEBI" id="CHEBI:43474"/>
        <dbReference type="ChEBI" id="CHEBI:57930"/>
        <dbReference type="ChEBI" id="CHEBI:173114"/>
        <dbReference type="EC" id="2.7.7.56"/>
    </reaction>
</comment>
<comment type="subunit">
    <text evidence="1">Homohexameric ring arranged as a trimer of dimers.</text>
</comment>
<comment type="similarity">
    <text evidence="1">Belongs to the RNase PH family.</text>
</comment>
<feature type="chain" id="PRO_0000139887" description="Ribonuclease PH">
    <location>
        <begin position="1"/>
        <end position="246"/>
    </location>
</feature>
<feature type="region of interest" description="Disordered" evidence="2">
    <location>
        <begin position="1"/>
        <end position="33"/>
    </location>
</feature>
<feature type="binding site" evidence="1">
    <location>
        <position position="90"/>
    </location>
    <ligand>
        <name>phosphate</name>
        <dbReference type="ChEBI" id="CHEBI:43474"/>
        <note>substrate</note>
    </ligand>
</feature>
<feature type="binding site" evidence="1">
    <location>
        <begin position="128"/>
        <end position="130"/>
    </location>
    <ligand>
        <name>phosphate</name>
        <dbReference type="ChEBI" id="CHEBI:43474"/>
        <note>substrate</note>
    </ligand>
</feature>
<keyword id="KW-0548">Nucleotidyltransferase</keyword>
<keyword id="KW-1185">Reference proteome</keyword>
<keyword id="KW-0694">RNA-binding</keyword>
<keyword id="KW-0698">rRNA processing</keyword>
<keyword id="KW-0808">Transferase</keyword>
<keyword id="KW-0819">tRNA processing</keyword>
<keyword id="KW-0820">tRNA-binding</keyword>
<proteinExistence type="inferred from homology"/>
<gene>
    <name evidence="1" type="primary">rph</name>
    <name type="ordered locus">DR_1585</name>
</gene>
<dbReference type="EC" id="2.7.7.56" evidence="1"/>
<dbReference type="EMBL" id="AE000513">
    <property type="protein sequence ID" value="AAF11146.1"/>
    <property type="molecule type" value="Genomic_DNA"/>
</dbReference>
<dbReference type="PIR" id="B75378">
    <property type="entry name" value="B75378"/>
</dbReference>
<dbReference type="RefSeq" id="NP_295308.1">
    <property type="nucleotide sequence ID" value="NC_001263.1"/>
</dbReference>
<dbReference type="RefSeq" id="WP_010888224.1">
    <property type="nucleotide sequence ID" value="NC_001263.1"/>
</dbReference>
<dbReference type="SMR" id="Q9RU11"/>
<dbReference type="FunCoup" id="Q9RU11">
    <property type="interactions" value="318"/>
</dbReference>
<dbReference type="STRING" id="243230.DR_1585"/>
<dbReference type="PaxDb" id="243230-DR_1585"/>
<dbReference type="EnsemblBacteria" id="AAF11146">
    <property type="protein sequence ID" value="AAF11146"/>
    <property type="gene ID" value="DR_1585"/>
</dbReference>
<dbReference type="GeneID" id="69517824"/>
<dbReference type="KEGG" id="dra:DR_1585"/>
<dbReference type="PATRIC" id="fig|243230.17.peg.1789"/>
<dbReference type="eggNOG" id="COG0689">
    <property type="taxonomic scope" value="Bacteria"/>
</dbReference>
<dbReference type="HOGENOM" id="CLU_050858_0_0_0"/>
<dbReference type="InParanoid" id="Q9RU11"/>
<dbReference type="OrthoDB" id="9802265at2"/>
<dbReference type="Proteomes" id="UP000002524">
    <property type="component" value="Chromosome 1"/>
</dbReference>
<dbReference type="GO" id="GO:0000175">
    <property type="term" value="F:3'-5'-RNA exonuclease activity"/>
    <property type="evidence" value="ECO:0007669"/>
    <property type="project" value="UniProtKB-UniRule"/>
</dbReference>
<dbReference type="GO" id="GO:0003723">
    <property type="term" value="F:RNA binding"/>
    <property type="evidence" value="ECO:0000318"/>
    <property type="project" value="GO_Central"/>
</dbReference>
<dbReference type="GO" id="GO:0000049">
    <property type="term" value="F:tRNA binding"/>
    <property type="evidence" value="ECO:0007669"/>
    <property type="project" value="UniProtKB-UniRule"/>
</dbReference>
<dbReference type="GO" id="GO:0009022">
    <property type="term" value="F:tRNA nucleotidyltransferase activity"/>
    <property type="evidence" value="ECO:0007669"/>
    <property type="project" value="UniProtKB-UniRule"/>
</dbReference>
<dbReference type="GO" id="GO:0016075">
    <property type="term" value="P:rRNA catabolic process"/>
    <property type="evidence" value="ECO:0000318"/>
    <property type="project" value="GO_Central"/>
</dbReference>
<dbReference type="GO" id="GO:0006364">
    <property type="term" value="P:rRNA processing"/>
    <property type="evidence" value="ECO:0007669"/>
    <property type="project" value="UniProtKB-KW"/>
</dbReference>
<dbReference type="GO" id="GO:0008033">
    <property type="term" value="P:tRNA processing"/>
    <property type="evidence" value="ECO:0007669"/>
    <property type="project" value="UniProtKB-UniRule"/>
</dbReference>
<dbReference type="CDD" id="cd11362">
    <property type="entry name" value="RNase_PH_bact"/>
    <property type="match status" value="1"/>
</dbReference>
<dbReference type="Gene3D" id="3.30.230.70">
    <property type="entry name" value="GHMP Kinase, N-terminal domain"/>
    <property type="match status" value="1"/>
</dbReference>
<dbReference type="HAMAP" id="MF_00564">
    <property type="entry name" value="RNase_PH"/>
    <property type="match status" value="1"/>
</dbReference>
<dbReference type="InterPro" id="IPR001247">
    <property type="entry name" value="ExoRNase_PH_dom1"/>
</dbReference>
<dbReference type="InterPro" id="IPR015847">
    <property type="entry name" value="ExoRNase_PH_dom2"/>
</dbReference>
<dbReference type="InterPro" id="IPR036345">
    <property type="entry name" value="ExoRNase_PH_dom2_sf"/>
</dbReference>
<dbReference type="InterPro" id="IPR027408">
    <property type="entry name" value="PNPase/RNase_PH_dom_sf"/>
</dbReference>
<dbReference type="InterPro" id="IPR020568">
    <property type="entry name" value="Ribosomal_Su5_D2-typ_SF"/>
</dbReference>
<dbReference type="InterPro" id="IPR050080">
    <property type="entry name" value="RNase_PH"/>
</dbReference>
<dbReference type="InterPro" id="IPR002381">
    <property type="entry name" value="RNase_PH_bac-type"/>
</dbReference>
<dbReference type="InterPro" id="IPR018336">
    <property type="entry name" value="RNase_PH_CS"/>
</dbReference>
<dbReference type="NCBIfam" id="TIGR01966">
    <property type="entry name" value="RNasePH"/>
    <property type="match status" value="1"/>
</dbReference>
<dbReference type="PANTHER" id="PTHR11953">
    <property type="entry name" value="EXOSOME COMPLEX COMPONENT"/>
    <property type="match status" value="1"/>
</dbReference>
<dbReference type="PANTHER" id="PTHR11953:SF0">
    <property type="entry name" value="EXOSOME COMPLEX COMPONENT RRP41"/>
    <property type="match status" value="1"/>
</dbReference>
<dbReference type="Pfam" id="PF01138">
    <property type="entry name" value="RNase_PH"/>
    <property type="match status" value="1"/>
</dbReference>
<dbReference type="Pfam" id="PF03725">
    <property type="entry name" value="RNase_PH_C"/>
    <property type="match status" value="1"/>
</dbReference>
<dbReference type="SUPFAM" id="SSF55666">
    <property type="entry name" value="Ribonuclease PH domain 2-like"/>
    <property type="match status" value="1"/>
</dbReference>
<dbReference type="SUPFAM" id="SSF54211">
    <property type="entry name" value="Ribosomal protein S5 domain 2-like"/>
    <property type="match status" value="1"/>
</dbReference>
<dbReference type="PROSITE" id="PS01277">
    <property type="entry name" value="RIBONUCLEASE_PH"/>
    <property type="match status" value="1"/>
</dbReference>
<sequence>MTPPKLPVREGRDALTPRPVSVQRGVNPHAPGSAHLKMGRTEILATVTLDDKPAPHMRGKKEGWLTAEYSMLPRSTTDRQARERNLQNGRRHEIQRLLGRALRSSMDLRPFKNQTLYVDCDVLVADGGTRVASVLAGHAALHDFCDRLINSGQLSEWPIVHNVGAISVGLIGDELRVDLDYEEDKVARADLNVIATDTGLLVEVQGGAELGPITVDEYTRLLSCGVASVQDVMRELTPQLAVIQGI</sequence>
<accession>Q9RU11</accession>
<reference key="1">
    <citation type="journal article" date="1999" name="Science">
        <title>Genome sequence of the radioresistant bacterium Deinococcus radiodurans R1.</title>
        <authorList>
            <person name="White O."/>
            <person name="Eisen J.A."/>
            <person name="Heidelberg J.F."/>
            <person name="Hickey E.K."/>
            <person name="Peterson J.D."/>
            <person name="Dodson R.J."/>
            <person name="Haft D.H."/>
            <person name="Gwinn M.L."/>
            <person name="Nelson W.C."/>
            <person name="Richardson D.L."/>
            <person name="Moffat K.S."/>
            <person name="Qin H."/>
            <person name="Jiang L."/>
            <person name="Pamphile W."/>
            <person name="Crosby M."/>
            <person name="Shen M."/>
            <person name="Vamathevan J.J."/>
            <person name="Lam P."/>
            <person name="McDonald L.A."/>
            <person name="Utterback T.R."/>
            <person name="Zalewski C."/>
            <person name="Makarova K.S."/>
            <person name="Aravind L."/>
            <person name="Daly M.J."/>
            <person name="Minton K.W."/>
            <person name="Fleischmann R.D."/>
            <person name="Ketchum K.A."/>
            <person name="Nelson K.E."/>
            <person name="Salzberg S.L."/>
            <person name="Smith H.O."/>
            <person name="Venter J.C."/>
            <person name="Fraser C.M."/>
        </authorList>
    </citation>
    <scope>NUCLEOTIDE SEQUENCE [LARGE SCALE GENOMIC DNA]</scope>
    <source>
        <strain>ATCC 13939 / DSM 20539 / JCM 16871 / CCUG 27074 / LMG 4051 / NBRC 15346 / NCIMB 9279 / VKM B-1422 / R1</strain>
    </source>
</reference>